<reference key="1">
    <citation type="journal article" date="2009" name="Proc. Natl. Acad. Sci. U.S.A.">
        <title>Biogeography of the Sulfolobus islandicus pan-genome.</title>
        <authorList>
            <person name="Reno M.L."/>
            <person name="Held N.L."/>
            <person name="Fields C.J."/>
            <person name="Burke P.V."/>
            <person name="Whitaker R.J."/>
        </authorList>
    </citation>
    <scope>NUCLEOTIDE SEQUENCE [LARGE SCALE GENOMIC DNA]</scope>
    <source>
        <strain>L.S.2.15 / Lassen #1</strain>
    </source>
</reference>
<evidence type="ECO:0000255" key="1">
    <source>
        <dbReference type="HAMAP-Rule" id="MF_00787"/>
    </source>
</evidence>
<comment type="function">
    <text evidence="1">Catalyzes the methylation of C-1 in cobalt-precorrin-5B to form cobalt-precorrin-6A.</text>
</comment>
<comment type="catalytic activity">
    <reaction evidence="1">
        <text>Co-precorrin-5B + S-adenosyl-L-methionine = Co-precorrin-6A + S-adenosyl-L-homocysteine</text>
        <dbReference type="Rhea" id="RHEA:26285"/>
        <dbReference type="ChEBI" id="CHEBI:57856"/>
        <dbReference type="ChEBI" id="CHEBI:59789"/>
        <dbReference type="ChEBI" id="CHEBI:60063"/>
        <dbReference type="ChEBI" id="CHEBI:60064"/>
        <dbReference type="EC" id="2.1.1.195"/>
    </reaction>
</comment>
<comment type="pathway">
    <text evidence="1">Cofactor biosynthesis; adenosylcobalamin biosynthesis; cob(II)yrinate a,c-diamide from sirohydrochlorin (anaerobic route): step 6/10.</text>
</comment>
<comment type="similarity">
    <text evidence="1">Belongs to the CbiD family.</text>
</comment>
<organism>
    <name type="scientific">Saccharolobus islandicus (strain L.S.2.15 / Lassen #1)</name>
    <name type="common">Sulfolobus islandicus</name>
    <dbReference type="NCBI Taxonomy" id="429572"/>
    <lineage>
        <taxon>Archaea</taxon>
        <taxon>Thermoproteota</taxon>
        <taxon>Thermoprotei</taxon>
        <taxon>Sulfolobales</taxon>
        <taxon>Sulfolobaceae</taxon>
        <taxon>Saccharolobus</taxon>
    </lineage>
</organism>
<protein>
    <recommendedName>
        <fullName evidence="1">Cobalt-precorrin-5B C(1)-methyltransferase</fullName>
        <ecNumber evidence="1">2.1.1.195</ecNumber>
    </recommendedName>
    <alternativeName>
        <fullName evidence="1">Cobalt-precorrin-6A synthase</fullName>
    </alternativeName>
</protein>
<accession>C3MJI6</accession>
<sequence length="349" mass="37506">MIINSLKRFGITTGAAASAAAKAAVIGLLNREKRNTVVIPTPIGLRLEIPVEKVEIDSGIACAEVKKFSGDNPDILDGLVIRCCAKLNESNEIVIVGGKGVGKVTRSGLKATMGETAISPTVRDMVINAIREVTDKGIQITIEVPNGDIIAENTLNKMVGIVGGISILGTTGIETPVSDDDYLEHIKCELNVIRQSYDFVVIAPGNSAAKYASKLFDSNSIIKVGDRIGDSIKLASSVFRKVILAGLPAKLLKVYAGIFNTHYSQGDARLESLTHASVLAGLPYDVLTKITNALSVEEAFTYMTKEQRRKVMKIVAEKILSRIKSFNGDINFCVIIFDYDSESLSRVGC</sequence>
<name>CBID_SACI2</name>
<feature type="chain" id="PRO_1000212942" description="Cobalt-precorrin-5B C(1)-methyltransferase">
    <location>
        <begin position="1"/>
        <end position="349"/>
    </location>
</feature>
<proteinExistence type="inferred from homology"/>
<dbReference type="EC" id="2.1.1.195" evidence="1"/>
<dbReference type="EMBL" id="CP001399">
    <property type="protein sequence ID" value="ACP34264.1"/>
    <property type="molecule type" value="Genomic_DNA"/>
</dbReference>
<dbReference type="RefSeq" id="WP_012712773.1">
    <property type="nucleotide sequence ID" value="NC_012589.1"/>
</dbReference>
<dbReference type="SMR" id="C3MJI6"/>
<dbReference type="GeneID" id="7797177"/>
<dbReference type="KEGG" id="sis:LS215_0111"/>
<dbReference type="HOGENOM" id="CLU_041273_1_0_2"/>
<dbReference type="OrthoDB" id="10423at2157"/>
<dbReference type="UniPathway" id="UPA00148">
    <property type="reaction ID" value="UER00227"/>
</dbReference>
<dbReference type="Proteomes" id="UP000001747">
    <property type="component" value="Chromosome"/>
</dbReference>
<dbReference type="GO" id="GO:0043780">
    <property type="term" value="F:cobalt-precorrin-5B C1-methyltransferase activity"/>
    <property type="evidence" value="ECO:0007669"/>
    <property type="project" value="RHEA"/>
</dbReference>
<dbReference type="GO" id="GO:0019251">
    <property type="term" value="P:anaerobic cobalamin biosynthetic process"/>
    <property type="evidence" value="ECO:0007669"/>
    <property type="project" value="UniProtKB-UniRule"/>
</dbReference>
<dbReference type="GO" id="GO:0032259">
    <property type="term" value="P:methylation"/>
    <property type="evidence" value="ECO:0007669"/>
    <property type="project" value="UniProtKB-KW"/>
</dbReference>
<dbReference type="Gene3D" id="3.30.2110.10">
    <property type="entry name" value="CbiD-like"/>
    <property type="match status" value="1"/>
</dbReference>
<dbReference type="Gene3D" id="3.40.50.10720">
    <property type="entry name" value="CbiD-like domains"/>
    <property type="match status" value="1"/>
</dbReference>
<dbReference type="HAMAP" id="MF_00787">
    <property type="entry name" value="CbiD"/>
    <property type="match status" value="1"/>
</dbReference>
<dbReference type="InterPro" id="IPR002748">
    <property type="entry name" value="CbiD"/>
</dbReference>
<dbReference type="InterPro" id="IPR036074">
    <property type="entry name" value="CbiD_sf"/>
</dbReference>
<dbReference type="NCBIfam" id="TIGR00312">
    <property type="entry name" value="cbiD"/>
    <property type="match status" value="1"/>
</dbReference>
<dbReference type="PANTHER" id="PTHR35863">
    <property type="entry name" value="COBALT-PRECORRIN-5B C(1)-METHYLTRANSFERASE"/>
    <property type="match status" value="1"/>
</dbReference>
<dbReference type="PANTHER" id="PTHR35863:SF1">
    <property type="entry name" value="COBALT-PRECORRIN-5B C(1)-METHYLTRANSFERASE"/>
    <property type="match status" value="1"/>
</dbReference>
<dbReference type="Pfam" id="PF01888">
    <property type="entry name" value="CbiD"/>
    <property type="match status" value="1"/>
</dbReference>
<dbReference type="PIRSF" id="PIRSF026782">
    <property type="entry name" value="CbiD"/>
    <property type="match status" value="1"/>
</dbReference>
<dbReference type="SUPFAM" id="SSF111342">
    <property type="entry name" value="CbiD-like"/>
    <property type="match status" value="1"/>
</dbReference>
<gene>
    <name evidence="1" type="primary">cbiD</name>
    <name type="ordered locus">LS215_0111</name>
</gene>
<keyword id="KW-0169">Cobalamin biosynthesis</keyword>
<keyword id="KW-0489">Methyltransferase</keyword>
<keyword id="KW-0949">S-adenosyl-L-methionine</keyword>
<keyword id="KW-0808">Transferase</keyword>